<name>MIAA_AZOVD</name>
<keyword id="KW-0067">ATP-binding</keyword>
<keyword id="KW-0460">Magnesium</keyword>
<keyword id="KW-0547">Nucleotide-binding</keyword>
<keyword id="KW-0808">Transferase</keyword>
<keyword id="KW-0819">tRNA processing</keyword>
<sequence>MSHLPPAIFLMGPTASGKTDLALELARVLPCELISVDSALVYRGMDIGTAKPAKALLAEFPHRLIDIRDPAESYSAAEFRDDALAAMAEISARGRIPLLVGGTMLYYKALLEGLADMPSADPALRAELEARGAAEGWAALHRELATVDPESAARIHPNDPQRLVRALEVYRVSGLSMTAHRLRQVAQNPLSDRSAGEHLPYTVVHLAIAPTQRQILHERIARRFRLMLEQGFVDEVELLWRRGDLHASLPSMRAVGYRQVWEYLDGLLTREQMVERGIIATRQLAKRQFTWLRNWTDLHWLDSLGDDNLQRTLKYLETAAILA</sequence>
<feature type="chain" id="PRO_1000203932" description="tRNA dimethylallyltransferase">
    <location>
        <begin position="1"/>
        <end position="323"/>
    </location>
</feature>
<feature type="region of interest" description="Interaction with substrate tRNA" evidence="1">
    <location>
        <begin position="37"/>
        <end position="40"/>
    </location>
</feature>
<feature type="region of interest" description="Interaction with substrate tRNA" evidence="1">
    <location>
        <begin position="161"/>
        <end position="165"/>
    </location>
</feature>
<feature type="binding site" evidence="1">
    <location>
        <begin position="12"/>
        <end position="19"/>
    </location>
    <ligand>
        <name>ATP</name>
        <dbReference type="ChEBI" id="CHEBI:30616"/>
    </ligand>
</feature>
<feature type="binding site" evidence="1">
    <location>
        <begin position="14"/>
        <end position="19"/>
    </location>
    <ligand>
        <name>substrate</name>
    </ligand>
</feature>
<feature type="site" description="Interaction with substrate tRNA" evidence="1">
    <location>
        <position position="103"/>
    </location>
</feature>
<feature type="site" description="Interaction with substrate tRNA" evidence="1">
    <location>
        <position position="125"/>
    </location>
</feature>
<evidence type="ECO:0000255" key="1">
    <source>
        <dbReference type="HAMAP-Rule" id="MF_00185"/>
    </source>
</evidence>
<organism>
    <name type="scientific">Azotobacter vinelandii (strain DJ / ATCC BAA-1303)</name>
    <dbReference type="NCBI Taxonomy" id="322710"/>
    <lineage>
        <taxon>Bacteria</taxon>
        <taxon>Pseudomonadati</taxon>
        <taxon>Pseudomonadota</taxon>
        <taxon>Gammaproteobacteria</taxon>
        <taxon>Pseudomonadales</taxon>
        <taxon>Pseudomonadaceae</taxon>
        <taxon>Azotobacter</taxon>
    </lineage>
</organism>
<comment type="function">
    <text evidence="1">Catalyzes the transfer of a dimethylallyl group onto the adenine at position 37 in tRNAs that read codons beginning with uridine, leading to the formation of N6-(dimethylallyl)adenosine (i(6)A).</text>
</comment>
<comment type="catalytic activity">
    <reaction evidence="1">
        <text>adenosine(37) in tRNA + dimethylallyl diphosphate = N(6)-dimethylallyladenosine(37) in tRNA + diphosphate</text>
        <dbReference type="Rhea" id="RHEA:26482"/>
        <dbReference type="Rhea" id="RHEA-COMP:10162"/>
        <dbReference type="Rhea" id="RHEA-COMP:10375"/>
        <dbReference type="ChEBI" id="CHEBI:33019"/>
        <dbReference type="ChEBI" id="CHEBI:57623"/>
        <dbReference type="ChEBI" id="CHEBI:74411"/>
        <dbReference type="ChEBI" id="CHEBI:74415"/>
        <dbReference type="EC" id="2.5.1.75"/>
    </reaction>
</comment>
<comment type="cofactor">
    <cofactor evidence="1">
        <name>Mg(2+)</name>
        <dbReference type="ChEBI" id="CHEBI:18420"/>
    </cofactor>
</comment>
<comment type="subunit">
    <text evidence="1">Monomer.</text>
</comment>
<comment type="similarity">
    <text evidence="1">Belongs to the IPP transferase family.</text>
</comment>
<protein>
    <recommendedName>
        <fullName evidence="1">tRNA dimethylallyltransferase</fullName>
        <ecNumber evidence="1">2.5.1.75</ecNumber>
    </recommendedName>
    <alternativeName>
        <fullName evidence="1">Dimethylallyl diphosphate:tRNA dimethylallyltransferase</fullName>
        <shortName evidence="1">DMAPP:tRNA dimethylallyltransferase</shortName>
        <shortName evidence="1">DMATase</shortName>
    </alternativeName>
    <alternativeName>
        <fullName evidence="1">Isopentenyl-diphosphate:tRNA isopentenyltransferase</fullName>
        <shortName evidence="1">IPP transferase</shortName>
        <shortName evidence="1">IPPT</shortName>
        <shortName evidence="1">IPTase</shortName>
    </alternativeName>
</protein>
<gene>
    <name evidence="1" type="primary">miaA</name>
    <name type="ordered locus">Avin_07530</name>
</gene>
<accession>C1DLQ1</accession>
<dbReference type="EC" id="2.5.1.75" evidence="1"/>
<dbReference type="EMBL" id="CP001157">
    <property type="protein sequence ID" value="ACO76999.1"/>
    <property type="molecule type" value="Genomic_DNA"/>
</dbReference>
<dbReference type="RefSeq" id="WP_012699424.1">
    <property type="nucleotide sequence ID" value="NC_012560.1"/>
</dbReference>
<dbReference type="SMR" id="C1DLQ1"/>
<dbReference type="STRING" id="322710.Avin_07530"/>
<dbReference type="EnsemblBacteria" id="ACO76999">
    <property type="protein sequence ID" value="ACO76999"/>
    <property type="gene ID" value="Avin_07530"/>
</dbReference>
<dbReference type="GeneID" id="88184149"/>
<dbReference type="KEGG" id="avn:Avin_07530"/>
<dbReference type="eggNOG" id="COG0324">
    <property type="taxonomic scope" value="Bacteria"/>
</dbReference>
<dbReference type="HOGENOM" id="CLU_032616_0_0_6"/>
<dbReference type="OrthoDB" id="9776390at2"/>
<dbReference type="Proteomes" id="UP000002424">
    <property type="component" value="Chromosome"/>
</dbReference>
<dbReference type="GO" id="GO:0005524">
    <property type="term" value="F:ATP binding"/>
    <property type="evidence" value="ECO:0007669"/>
    <property type="project" value="UniProtKB-UniRule"/>
</dbReference>
<dbReference type="GO" id="GO:0052381">
    <property type="term" value="F:tRNA dimethylallyltransferase activity"/>
    <property type="evidence" value="ECO:0007669"/>
    <property type="project" value="UniProtKB-UniRule"/>
</dbReference>
<dbReference type="GO" id="GO:0006400">
    <property type="term" value="P:tRNA modification"/>
    <property type="evidence" value="ECO:0007669"/>
    <property type="project" value="TreeGrafter"/>
</dbReference>
<dbReference type="FunFam" id="1.10.20.140:FF:000001">
    <property type="entry name" value="tRNA dimethylallyltransferase"/>
    <property type="match status" value="1"/>
</dbReference>
<dbReference type="Gene3D" id="1.10.20.140">
    <property type="match status" value="1"/>
</dbReference>
<dbReference type="Gene3D" id="3.40.50.300">
    <property type="entry name" value="P-loop containing nucleotide triphosphate hydrolases"/>
    <property type="match status" value="1"/>
</dbReference>
<dbReference type="HAMAP" id="MF_00185">
    <property type="entry name" value="IPP_trans"/>
    <property type="match status" value="1"/>
</dbReference>
<dbReference type="InterPro" id="IPR039657">
    <property type="entry name" value="Dimethylallyltransferase"/>
</dbReference>
<dbReference type="InterPro" id="IPR018022">
    <property type="entry name" value="IPT"/>
</dbReference>
<dbReference type="InterPro" id="IPR027417">
    <property type="entry name" value="P-loop_NTPase"/>
</dbReference>
<dbReference type="NCBIfam" id="TIGR00174">
    <property type="entry name" value="miaA"/>
    <property type="match status" value="1"/>
</dbReference>
<dbReference type="PANTHER" id="PTHR11088">
    <property type="entry name" value="TRNA DIMETHYLALLYLTRANSFERASE"/>
    <property type="match status" value="1"/>
</dbReference>
<dbReference type="PANTHER" id="PTHR11088:SF60">
    <property type="entry name" value="TRNA DIMETHYLALLYLTRANSFERASE"/>
    <property type="match status" value="1"/>
</dbReference>
<dbReference type="Pfam" id="PF01715">
    <property type="entry name" value="IPPT"/>
    <property type="match status" value="1"/>
</dbReference>
<dbReference type="SUPFAM" id="SSF52540">
    <property type="entry name" value="P-loop containing nucleoside triphosphate hydrolases"/>
    <property type="match status" value="2"/>
</dbReference>
<reference key="1">
    <citation type="journal article" date="2009" name="J. Bacteriol.">
        <title>Genome sequence of Azotobacter vinelandii, an obligate aerobe specialized to support diverse anaerobic metabolic processes.</title>
        <authorList>
            <person name="Setubal J.C."/>
            <person name="Dos Santos P."/>
            <person name="Goldman B.S."/>
            <person name="Ertesvaag H."/>
            <person name="Espin G."/>
            <person name="Rubio L.M."/>
            <person name="Valla S."/>
            <person name="Almeida N.F."/>
            <person name="Balasubramanian D."/>
            <person name="Cromes L."/>
            <person name="Curatti L."/>
            <person name="Du Z."/>
            <person name="Godsy E."/>
            <person name="Goodner B."/>
            <person name="Hellner-Burris K."/>
            <person name="Hernandez J.A."/>
            <person name="Houmiel K."/>
            <person name="Imperial J."/>
            <person name="Kennedy C."/>
            <person name="Larson T.J."/>
            <person name="Latreille P."/>
            <person name="Ligon L.S."/>
            <person name="Lu J."/>
            <person name="Maerk M."/>
            <person name="Miller N.M."/>
            <person name="Norton S."/>
            <person name="O'Carroll I.P."/>
            <person name="Paulsen I."/>
            <person name="Raulfs E.C."/>
            <person name="Roemer R."/>
            <person name="Rosser J."/>
            <person name="Segura D."/>
            <person name="Slater S."/>
            <person name="Stricklin S.L."/>
            <person name="Studholme D.J."/>
            <person name="Sun J."/>
            <person name="Viana C.J."/>
            <person name="Wallin E."/>
            <person name="Wang B."/>
            <person name="Wheeler C."/>
            <person name="Zhu H."/>
            <person name="Dean D.R."/>
            <person name="Dixon R."/>
            <person name="Wood D."/>
        </authorList>
    </citation>
    <scope>NUCLEOTIDE SEQUENCE [LARGE SCALE GENOMIC DNA]</scope>
    <source>
        <strain>DJ / ATCC BAA-1303</strain>
    </source>
</reference>
<proteinExistence type="inferred from homology"/>